<feature type="chain" id="PRO_1000057606" description="S-ribosylhomocysteine lyase">
    <location>
        <begin position="1"/>
        <end position="171"/>
    </location>
</feature>
<feature type="binding site" evidence="1">
    <location>
        <position position="54"/>
    </location>
    <ligand>
        <name>Fe cation</name>
        <dbReference type="ChEBI" id="CHEBI:24875"/>
    </ligand>
</feature>
<feature type="binding site" evidence="1">
    <location>
        <position position="58"/>
    </location>
    <ligand>
        <name>Fe cation</name>
        <dbReference type="ChEBI" id="CHEBI:24875"/>
    </ligand>
</feature>
<feature type="binding site" evidence="1">
    <location>
        <position position="128"/>
    </location>
    <ligand>
        <name>Fe cation</name>
        <dbReference type="ChEBI" id="CHEBI:24875"/>
    </ligand>
</feature>
<reference key="1">
    <citation type="journal article" date="2008" name="J. Bacteriol.">
        <title>The pangenome structure of Escherichia coli: comparative genomic analysis of E. coli commensal and pathogenic isolates.</title>
        <authorList>
            <person name="Rasko D.A."/>
            <person name="Rosovitz M.J."/>
            <person name="Myers G.S.A."/>
            <person name="Mongodin E.F."/>
            <person name="Fricke W.F."/>
            <person name="Gajer P."/>
            <person name="Crabtree J."/>
            <person name="Sebaihia M."/>
            <person name="Thomson N.R."/>
            <person name="Chaudhuri R."/>
            <person name="Henderson I.R."/>
            <person name="Sperandio V."/>
            <person name="Ravel J."/>
        </authorList>
    </citation>
    <scope>NUCLEOTIDE SEQUENCE [LARGE SCALE GENOMIC DNA]</scope>
    <source>
        <strain>HS</strain>
    </source>
</reference>
<sequence>MPLLDSFTVDHTRMEAPAVRVAKTMNTPHGDAITVFDLRFCVPNKEVMPERGIHTLEHLFAGFMRNHLNGNGVEIIDISPMGCRTGFYMSLIGTPDEQRVADAWKAAMEDVLKVQDQNQIPELNVYQCGTYQMHSLQEAQDIARSILERDVRINSNEELALPKEKLQELHI</sequence>
<organism>
    <name type="scientific">Escherichia coli O9:H4 (strain HS)</name>
    <dbReference type="NCBI Taxonomy" id="331112"/>
    <lineage>
        <taxon>Bacteria</taxon>
        <taxon>Pseudomonadati</taxon>
        <taxon>Pseudomonadota</taxon>
        <taxon>Gammaproteobacteria</taxon>
        <taxon>Enterobacterales</taxon>
        <taxon>Enterobacteriaceae</taxon>
        <taxon>Escherichia</taxon>
    </lineage>
</organism>
<name>LUXS_ECOHS</name>
<keyword id="KW-0071">Autoinducer synthesis</keyword>
<keyword id="KW-0408">Iron</keyword>
<keyword id="KW-0456">Lyase</keyword>
<keyword id="KW-0479">Metal-binding</keyword>
<keyword id="KW-0673">Quorum sensing</keyword>
<dbReference type="EC" id="4.4.1.21" evidence="1"/>
<dbReference type="EMBL" id="CP000802">
    <property type="protein sequence ID" value="ABV07073.1"/>
    <property type="molecule type" value="Genomic_DNA"/>
</dbReference>
<dbReference type="RefSeq" id="WP_001130211.1">
    <property type="nucleotide sequence ID" value="NC_009800.1"/>
</dbReference>
<dbReference type="SMR" id="A8A3G9"/>
<dbReference type="GeneID" id="93779324"/>
<dbReference type="KEGG" id="ecx:EcHS_A2823"/>
<dbReference type="HOGENOM" id="CLU_107531_2_0_6"/>
<dbReference type="GO" id="GO:0005506">
    <property type="term" value="F:iron ion binding"/>
    <property type="evidence" value="ECO:0007669"/>
    <property type="project" value="InterPro"/>
</dbReference>
<dbReference type="GO" id="GO:0043768">
    <property type="term" value="F:S-ribosylhomocysteine lyase activity"/>
    <property type="evidence" value="ECO:0007669"/>
    <property type="project" value="UniProtKB-UniRule"/>
</dbReference>
<dbReference type="GO" id="GO:0009372">
    <property type="term" value="P:quorum sensing"/>
    <property type="evidence" value="ECO:0007669"/>
    <property type="project" value="UniProtKB-UniRule"/>
</dbReference>
<dbReference type="FunFam" id="3.30.1360.80:FF:000001">
    <property type="entry name" value="S-ribosylhomocysteine lyase"/>
    <property type="match status" value="1"/>
</dbReference>
<dbReference type="Gene3D" id="3.30.1360.80">
    <property type="entry name" value="S-ribosylhomocysteinase (LuxS)"/>
    <property type="match status" value="1"/>
</dbReference>
<dbReference type="HAMAP" id="MF_00091">
    <property type="entry name" value="LuxS"/>
    <property type="match status" value="1"/>
</dbReference>
<dbReference type="InterPro" id="IPR037005">
    <property type="entry name" value="LuxS_sf"/>
</dbReference>
<dbReference type="InterPro" id="IPR011249">
    <property type="entry name" value="Metalloenz_LuxS/M16"/>
</dbReference>
<dbReference type="InterPro" id="IPR003815">
    <property type="entry name" value="S-ribosylhomocysteinase"/>
</dbReference>
<dbReference type="NCBIfam" id="NF002602">
    <property type="entry name" value="PRK02260.1-2"/>
    <property type="match status" value="1"/>
</dbReference>
<dbReference type="PANTHER" id="PTHR35799">
    <property type="entry name" value="S-RIBOSYLHOMOCYSTEINE LYASE"/>
    <property type="match status" value="1"/>
</dbReference>
<dbReference type="PANTHER" id="PTHR35799:SF1">
    <property type="entry name" value="S-RIBOSYLHOMOCYSTEINE LYASE"/>
    <property type="match status" value="1"/>
</dbReference>
<dbReference type="Pfam" id="PF02664">
    <property type="entry name" value="LuxS"/>
    <property type="match status" value="1"/>
</dbReference>
<dbReference type="PIRSF" id="PIRSF006160">
    <property type="entry name" value="AI2"/>
    <property type="match status" value="1"/>
</dbReference>
<dbReference type="PRINTS" id="PR01487">
    <property type="entry name" value="LUXSPROTEIN"/>
</dbReference>
<dbReference type="SUPFAM" id="SSF63411">
    <property type="entry name" value="LuxS/MPP-like metallohydrolase"/>
    <property type="match status" value="1"/>
</dbReference>
<protein>
    <recommendedName>
        <fullName evidence="1">S-ribosylhomocysteine lyase</fullName>
        <ecNumber evidence="1">4.4.1.21</ecNumber>
    </recommendedName>
    <alternativeName>
        <fullName evidence="1">AI-2 synthesis protein</fullName>
    </alternativeName>
    <alternativeName>
        <fullName evidence="1">Autoinducer-2 production protein LuxS</fullName>
    </alternativeName>
</protein>
<accession>A8A3G9</accession>
<evidence type="ECO:0000255" key="1">
    <source>
        <dbReference type="HAMAP-Rule" id="MF_00091"/>
    </source>
</evidence>
<proteinExistence type="inferred from homology"/>
<gene>
    <name evidence="1" type="primary">luxS</name>
    <name type="ordered locus">EcHS_A2823</name>
</gene>
<comment type="function">
    <text evidence="1">Involved in the synthesis of autoinducer 2 (AI-2) which is secreted by bacteria and is used to communicate both the cell density and the metabolic potential of the environment. The regulation of gene expression in response to changes in cell density is called quorum sensing. Catalyzes the transformation of S-ribosylhomocysteine (RHC) to homocysteine (HC) and 4,5-dihydroxy-2,3-pentadione (DPD).</text>
</comment>
<comment type="catalytic activity">
    <reaction evidence="1">
        <text>S-(5-deoxy-D-ribos-5-yl)-L-homocysteine = (S)-4,5-dihydroxypentane-2,3-dione + L-homocysteine</text>
        <dbReference type="Rhea" id="RHEA:17753"/>
        <dbReference type="ChEBI" id="CHEBI:29484"/>
        <dbReference type="ChEBI" id="CHEBI:58195"/>
        <dbReference type="ChEBI" id="CHEBI:58199"/>
        <dbReference type="EC" id="4.4.1.21"/>
    </reaction>
</comment>
<comment type="cofactor">
    <cofactor evidence="1">
        <name>Fe cation</name>
        <dbReference type="ChEBI" id="CHEBI:24875"/>
    </cofactor>
    <text evidence="1">Binds 1 Fe cation per subunit.</text>
</comment>
<comment type="subunit">
    <text evidence="1">Homodimer.</text>
</comment>
<comment type="similarity">
    <text evidence="1">Belongs to the LuxS family.</text>
</comment>